<proteinExistence type="inferred from homology"/>
<evidence type="ECO:0000255" key="1">
    <source>
        <dbReference type="HAMAP-Rule" id="MF_00736"/>
    </source>
</evidence>
<evidence type="ECO:0000305" key="2"/>
<organism>
    <name type="scientific">Mesoplasma florum (strain ATCC 33453 / NBRC 100688 / NCTC 11704 / L1)</name>
    <name type="common">Acholeplasma florum</name>
    <dbReference type="NCBI Taxonomy" id="265311"/>
    <lineage>
        <taxon>Bacteria</taxon>
        <taxon>Bacillati</taxon>
        <taxon>Mycoplasmatota</taxon>
        <taxon>Mollicutes</taxon>
        <taxon>Entomoplasmatales</taxon>
        <taxon>Entomoplasmataceae</taxon>
        <taxon>Mesoplasma</taxon>
    </lineage>
</organism>
<accession>Q6F0K7</accession>
<protein>
    <recommendedName>
        <fullName evidence="1">Large ribosomal subunit protein uL11</fullName>
    </recommendedName>
    <alternativeName>
        <fullName evidence="2">50S ribosomal protein L11</fullName>
    </alternativeName>
</protein>
<feature type="chain" id="PRO_0000104313" description="Large ribosomal subunit protein uL11">
    <location>
        <begin position="1"/>
        <end position="142"/>
    </location>
</feature>
<comment type="function">
    <text evidence="1">Forms part of the ribosomal stalk which helps the ribosome interact with GTP-bound translation factors.</text>
</comment>
<comment type="subunit">
    <text evidence="1">Part of the ribosomal stalk of the 50S ribosomal subunit. Interacts with L10 and the large rRNA to form the base of the stalk. L10 forms an elongated spine to which L12 dimers bind in a sequential fashion forming a multimeric L10(L12)X complex.</text>
</comment>
<comment type="PTM">
    <text evidence="1">One or more lysine residues are methylated.</text>
</comment>
<comment type="similarity">
    <text evidence="1">Belongs to the universal ribosomal protein uL11 family.</text>
</comment>
<dbReference type="EMBL" id="AE017263">
    <property type="protein sequence ID" value="AAT75966.1"/>
    <property type="molecule type" value="Genomic_DNA"/>
</dbReference>
<dbReference type="RefSeq" id="WP_011183506.1">
    <property type="nucleotide sequence ID" value="NC_006055.1"/>
</dbReference>
<dbReference type="RefSeq" id="YP_053850.1">
    <property type="nucleotide sequence ID" value="NC_006055.1"/>
</dbReference>
<dbReference type="SMR" id="Q6F0K7"/>
<dbReference type="STRING" id="265311.Mfl609"/>
<dbReference type="PaxDb" id="265311-Mfl609"/>
<dbReference type="EnsemblBacteria" id="AAT75966">
    <property type="protein sequence ID" value="AAT75966"/>
    <property type="gene ID" value="Mfl609"/>
</dbReference>
<dbReference type="GeneID" id="2898226"/>
<dbReference type="KEGG" id="mfl:Mfl609"/>
<dbReference type="PATRIC" id="fig|265311.5.peg.612"/>
<dbReference type="eggNOG" id="COG0080">
    <property type="taxonomic scope" value="Bacteria"/>
</dbReference>
<dbReference type="HOGENOM" id="CLU_074237_2_2_14"/>
<dbReference type="OrthoDB" id="9802408at2"/>
<dbReference type="Proteomes" id="UP000006647">
    <property type="component" value="Chromosome"/>
</dbReference>
<dbReference type="GO" id="GO:0022625">
    <property type="term" value="C:cytosolic large ribosomal subunit"/>
    <property type="evidence" value="ECO:0007669"/>
    <property type="project" value="TreeGrafter"/>
</dbReference>
<dbReference type="GO" id="GO:0070180">
    <property type="term" value="F:large ribosomal subunit rRNA binding"/>
    <property type="evidence" value="ECO:0007669"/>
    <property type="project" value="UniProtKB-UniRule"/>
</dbReference>
<dbReference type="GO" id="GO:0003735">
    <property type="term" value="F:structural constituent of ribosome"/>
    <property type="evidence" value="ECO:0007669"/>
    <property type="project" value="InterPro"/>
</dbReference>
<dbReference type="GO" id="GO:0006412">
    <property type="term" value="P:translation"/>
    <property type="evidence" value="ECO:0007669"/>
    <property type="project" value="UniProtKB-UniRule"/>
</dbReference>
<dbReference type="CDD" id="cd00349">
    <property type="entry name" value="Ribosomal_L11"/>
    <property type="match status" value="1"/>
</dbReference>
<dbReference type="FunFam" id="1.10.10.250:FF:000001">
    <property type="entry name" value="50S ribosomal protein L11"/>
    <property type="match status" value="1"/>
</dbReference>
<dbReference type="Gene3D" id="1.10.10.250">
    <property type="entry name" value="Ribosomal protein L11, C-terminal domain"/>
    <property type="match status" value="1"/>
</dbReference>
<dbReference type="Gene3D" id="3.30.1550.10">
    <property type="entry name" value="Ribosomal protein L11/L12, N-terminal domain"/>
    <property type="match status" value="1"/>
</dbReference>
<dbReference type="HAMAP" id="MF_00736">
    <property type="entry name" value="Ribosomal_uL11"/>
    <property type="match status" value="1"/>
</dbReference>
<dbReference type="InterPro" id="IPR000911">
    <property type="entry name" value="Ribosomal_uL11"/>
</dbReference>
<dbReference type="InterPro" id="IPR006519">
    <property type="entry name" value="Ribosomal_uL11_bac-typ"/>
</dbReference>
<dbReference type="InterPro" id="IPR020783">
    <property type="entry name" value="Ribosomal_uL11_C"/>
</dbReference>
<dbReference type="InterPro" id="IPR036769">
    <property type="entry name" value="Ribosomal_uL11_C_sf"/>
</dbReference>
<dbReference type="InterPro" id="IPR020785">
    <property type="entry name" value="Ribosomal_uL11_CS"/>
</dbReference>
<dbReference type="InterPro" id="IPR020784">
    <property type="entry name" value="Ribosomal_uL11_N"/>
</dbReference>
<dbReference type="InterPro" id="IPR036796">
    <property type="entry name" value="Ribosomal_uL11_N_sf"/>
</dbReference>
<dbReference type="NCBIfam" id="TIGR01632">
    <property type="entry name" value="L11_bact"/>
    <property type="match status" value="1"/>
</dbReference>
<dbReference type="PANTHER" id="PTHR11661">
    <property type="entry name" value="60S RIBOSOMAL PROTEIN L12"/>
    <property type="match status" value="1"/>
</dbReference>
<dbReference type="PANTHER" id="PTHR11661:SF1">
    <property type="entry name" value="LARGE RIBOSOMAL SUBUNIT PROTEIN UL11M"/>
    <property type="match status" value="1"/>
</dbReference>
<dbReference type="Pfam" id="PF00298">
    <property type="entry name" value="Ribosomal_L11"/>
    <property type="match status" value="1"/>
</dbReference>
<dbReference type="Pfam" id="PF03946">
    <property type="entry name" value="Ribosomal_L11_N"/>
    <property type="match status" value="1"/>
</dbReference>
<dbReference type="SMART" id="SM00649">
    <property type="entry name" value="RL11"/>
    <property type="match status" value="1"/>
</dbReference>
<dbReference type="SUPFAM" id="SSF54747">
    <property type="entry name" value="Ribosomal L11/L12e N-terminal domain"/>
    <property type="match status" value="1"/>
</dbReference>
<dbReference type="SUPFAM" id="SSF46906">
    <property type="entry name" value="Ribosomal protein L11, C-terminal domain"/>
    <property type="match status" value="1"/>
</dbReference>
<dbReference type="PROSITE" id="PS00359">
    <property type="entry name" value="RIBOSOMAL_L11"/>
    <property type="match status" value="1"/>
</dbReference>
<keyword id="KW-0488">Methylation</keyword>
<keyword id="KW-1185">Reference proteome</keyword>
<keyword id="KW-0687">Ribonucleoprotein</keyword>
<keyword id="KW-0689">Ribosomal protein</keyword>
<keyword id="KW-0694">RNA-binding</keyword>
<keyword id="KW-0699">rRNA-binding</keyword>
<reference key="1">
    <citation type="submission" date="2004-06" db="EMBL/GenBank/DDBJ databases">
        <authorList>
            <person name="Birren B.W."/>
            <person name="Stange-Thomann N."/>
            <person name="Hafez N."/>
            <person name="DeCaprio D."/>
            <person name="Fisher S."/>
            <person name="Butler J."/>
            <person name="Elkins T."/>
            <person name="Kodira C.D."/>
            <person name="Major J."/>
            <person name="Wang S."/>
            <person name="Nicol R."/>
            <person name="Nusbaum C."/>
        </authorList>
    </citation>
    <scope>NUCLEOTIDE SEQUENCE [LARGE SCALE GENOMIC DNA]</scope>
    <source>
        <strain>ATCC 33453 / NBRC 100688 / NCTC 11704 / L1</strain>
    </source>
</reference>
<gene>
    <name evidence="1" type="primary">rplK</name>
    <name type="ordered locus">Mfl609</name>
</gene>
<sequence>MAKRITRIAKLEFMAMQAKPGAELASLGINMPEFTKQFNDATKDRAGDVVPVVITAYDDKSFDFILKTTPAAILLKKAAGIEKGASNAKTQTVATISADKVREIAEYKLVDLNANDVEAAMKIIAGTAKNMGIKITGMEETN</sequence>
<name>RL11_MESFL</name>